<accession>A4G2A5</accession>
<evidence type="ECO:0000255" key="1">
    <source>
        <dbReference type="HAMAP-Rule" id="MF_01043"/>
    </source>
</evidence>
<comment type="function">
    <text evidence="1">Catalyzes the transfer of an acyl group from acyl-phosphate (acyl-PO(4)) to glycerol-3-phosphate (G3P) to form lysophosphatidic acid (LPA). This enzyme utilizes acyl-phosphate as fatty acyl donor, but not acyl-CoA or acyl-ACP.</text>
</comment>
<comment type="catalytic activity">
    <reaction evidence="1">
        <text>an acyl phosphate + sn-glycerol 3-phosphate = a 1-acyl-sn-glycero-3-phosphate + phosphate</text>
        <dbReference type="Rhea" id="RHEA:34075"/>
        <dbReference type="ChEBI" id="CHEBI:43474"/>
        <dbReference type="ChEBI" id="CHEBI:57597"/>
        <dbReference type="ChEBI" id="CHEBI:57970"/>
        <dbReference type="ChEBI" id="CHEBI:59918"/>
        <dbReference type="EC" id="2.3.1.275"/>
    </reaction>
</comment>
<comment type="pathway">
    <text evidence="1">Lipid metabolism; phospholipid metabolism.</text>
</comment>
<comment type="subunit">
    <text evidence="1">Probably interacts with PlsX.</text>
</comment>
<comment type="subcellular location">
    <subcellularLocation>
        <location evidence="1">Cell inner membrane</location>
        <topology evidence="1">Multi-pass membrane protein</topology>
    </subcellularLocation>
</comment>
<comment type="similarity">
    <text evidence="1">Belongs to the PlsY family.</text>
</comment>
<sequence length="205" mass="21788">MNTVLSTVLFAIGAYLIGSISFAVVVSKCFRLADPRSYGSKNPGATNVLRSGNKKAAILTLLGDGAKGFVAVWLVKHFGPDYGVQESGVALVAIAVFLGHLWPIFFRFVGGKGVATALGILLALNGWLGLATLITWLVIAYAFRYSSFAALIAAIFAPFYYALMFGPDAILLAVVAMSVLLIYRHGKNIGNLLAGKESRIGSKKK</sequence>
<gene>
    <name evidence="1" type="primary">plsY</name>
    <name type="ordered locus">HEAR0424</name>
</gene>
<feature type="chain" id="PRO_1000136094" description="Glycerol-3-phosphate acyltransferase">
    <location>
        <begin position="1"/>
        <end position="205"/>
    </location>
</feature>
<feature type="transmembrane region" description="Helical" evidence="1">
    <location>
        <begin position="6"/>
        <end position="26"/>
    </location>
</feature>
<feature type="transmembrane region" description="Helical" evidence="1">
    <location>
        <begin position="55"/>
        <end position="75"/>
    </location>
</feature>
<feature type="transmembrane region" description="Helical" evidence="1">
    <location>
        <begin position="89"/>
        <end position="109"/>
    </location>
</feature>
<feature type="transmembrane region" description="Helical" evidence="1">
    <location>
        <begin position="120"/>
        <end position="140"/>
    </location>
</feature>
<feature type="transmembrane region" description="Helical" evidence="1">
    <location>
        <begin position="162"/>
        <end position="182"/>
    </location>
</feature>
<proteinExistence type="inferred from homology"/>
<organism>
    <name type="scientific">Herminiimonas arsenicoxydans</name>
    <dbReference type="NCBI Taxonomy" id="204773"/>
    <lineage>
        <taxon>Bacteria</taxon>
        <taxon>Pseudomonadati</taxon>
        <taxon>Pseudomonadota</taxon>
        <taxon>Betaproteobacteria</taxon>
        <taxon>Burkholderiales</taxon>
        <taxon>Oxalobacteraceae</taxon>
        <taxon>Herminiimonas</taxon>
    </lineage>
</organism>
<dbReference type="EC" id="2.3.1.275" evidence="1"/>
<dbReference type="EMBL" id="CU207211">
    <property type="protein sequence ID" value="CAL60642.1"/>
    <property type="molecule type" value="Genomic_DNA"/>
</dbReference>
<dbReference type="SMR" id="A4G2A5"/>
<dbReference type="STRING" id="204773.HEAR0424"/>
<dbReference type="KEGG" id="har:HEAR0424"/>
<dbReference type="eggNOG" id="COG0344">
    <property type="taxonomic scope" value="Bacteria"/>
</dbReference>
<dbReference type="HOGENOM" id="CLU_081254_0_0_4"/>
<dbReference type="OrthoDB" id="9777124at2"/>
<dbReference type="UniPathway" id="UPA00085"/>
<dbReference type="Proteomes" id="UP000006697">
    <property type="component" value="Chromosome"/>
</dbReference>
<dbReference type="GO" id="GO:0005886">
    <property type="term" value="C:plasma membrane"/>
    <property type="evidence" value="ECO:0007669"/>
    <property type="project" value="UniProtKB-SubCell"/>
</dbReference>
<dbReference type="GO" id="GO:0043772">
    <property type="term" value="F:acyl-phosphate glycerol-3-phosphate acyltransferase activity"/>
    <property type="evidence" value="ECO:0007669"/>
    <property type="project" value="UniProtKB-UniRule"/>
</dbReference>
<dbReference type="GO" id="GO:0008654">
    <property type="term" value="P:phospholipid biosynthetic process"/>
    <property type="evidence" value="ECO:0007669"/>
    <property type="project" value="UniProtKB-UniRule"/>
</dbReference>
<dbReference type="HAMAP" id="MF_01043">
    <property type="entry name" value="PlsY"/>
    <property type="match status" value="1"/>
</dbReference>
<dbReference type="InterPro" id="IPR003811">
    <property type="entry name" value="G3P_acylTferase_PlsY"/>
</dbReference>
<dbReference type="NCBIfam" id="TIGR00023">
    <property type="entry name" value="glycerol-3-phosphate 1-O-acyltransferase PlsY"/>
    <property type="match status" value="1"/>
</dbReference>
<dbReference type="PANTHER" id="PTHR30309:SF0">
    <property type="entry name" value="GLYCEROL-3-PHOSPHATE ACYLTRANSFERASE-RELATED"/>
    <property type="match status" value="1"/>
</dbReference>
<dbReference type="PANTHER" id="PTHR30309">
    <property type="entry name" value="INNER MEMBRANE PROTEIN YGIH"/>
    <property type="match status" value="1"/>
</dbReference>
<dbReference type="Pfam" id="PF02660">
    <property type="entry name" value="G3P_acyltransf"/>
    <property type="match status" value="1"/>
</dbReference>
<dbReference type="SMART" id="SM01207">
    <property type="entry name" value="G3P_acyltransf"/>
    <property type="match status" value="1"/>
</dbReference>
<reference key="1">
    <citation type="journal article" date="2007" name="PLoS Genet.">
        <title>A tale of two oxidation states: bacterial colonization of arsenic-rich environments.</title>
        <authorList>
            <person name="Muller D."/>
            <person name="Medigue C."/>
            <person name="Koechler S."/>
            <person name="Barbe V."/>
            <person name="Barakat M."/>
            <person name="Talla E."/>
            <person name="Bonnefoy V."/>
            <person name="Krin E."/>
            <person name="Arsene-Ploetze F."/>
            <person name="Carapito C."/>
            <person name="Chandler M."/>
            <person name="Cournoyer B."/>
            <person name="Cruveiller S."/>
            <person name="Dossat C."/>
            <person name="Duval S."/>
            <person name="Heymann M."/>
            <person name="Leize E."/>
            <person name="Lieutaud A."/>
            <person name="Lievremont D."/>
            <person name="Makita Y."/>
            <person name="Mangenot S."/>
            <person name="Nitschke W."/>
            <person name="Ortet P."/>
            <person name="Perdrial N."/>
            <person name="Schoepp B."/>
            <person name="Siguier P."/>
            <person name="Simeonova D.D."/>
            <person name="Rouy Z."/>
            <person name="Segurens B."/>
            <person name="Turlin E."/>
            <person name="Vallenet D."/>
            <person name="van Dorsselaer A."/>
            <person name="Weiss S."/>
            <person name="Weissenbach J."/>
            <person name="Lett M.-C."/>
            <person name="Danchin A."/>
            <person name="Bertin P.N."/>
        </authorList>
    </citation>
    <scope>NUCLEOTIDE SEQUENCE [LARGE SCALE GENOMIC DNA]</scope>
    <source>
        <strain>ULPAs1</strain>
    </source>
</reference>
<keyword id="KW-0997">Cell inner membrane</keyword>
<keyword id="KW-1003">Cell membrane</keyword>
<keyword id="KW-0444">Lipid biosynthesis</keyword>
<keyword id="KW-0443">Lipid metabolism</keyword>
<keyword id="KW-0472">Membrane</keyword>
<keyword id="KW-0594">Phospholipid biosynthesis</keyword>
<keyword id="KW-1208">Phospholipid metabolism</keyword>
<keyword id="KW-1185">Reference proteome</keyword>
<keyword id="KW-0808">Transferase</keyword>
<keyword id="KW-0812">Transmembrane</keyword>
<keyword id="KW-1133">Transmembrane helix</keyword>
<name>PLSY_HERAR</name>
<protein>
    <recommendedName>
        <fullName evidence="1">Glycerol-3-phosphate acyltransferase</fullName>
    </recommendedName>
    <alternativeName>
        <fullName evidence="1">Acyl-PO4 G3P acyltransferase</fullName>
    </alternativeName>
    <alternativeName>
        <fullName evidence="1">Acyl-phosphate--glycerol-3-phosphate acyltransferase</fullName>
    </alternativeName>
    <alternativeName>
        <fullName evidence="1">G3P acyltransferase</fullName>
        <shortName evidence="1">GPAT</shortName>
        <ecNumber evidence="1">2.3.1.275</ecNumber>
    </alternativeName>
    <alternativeName>
        <fullName evidence="1">Lysophosphatidic acid synthase</fullName>
        <shortName evidence="1">LPA synthase</shortName>
    </alternativeName>
</protein>